<gene>
    <name evidence="3" type="primary">THR1</name>
    <name evidence="6" type="ORF">CNAG_04156</name>
</gene>
<sequence length="357" mass="38161">MPARKYKIHVPCTSANIGPGFDVCGIALSLSLSLVVTIPSVSSGAEPLPKIIYTGLDSDNVPLSPYKNLLTRVALYVLRANGITTFPPGVTIEARNEIPFGRGLGSSGAAVIAGVLLGDLLGNLSLPKSRLLDFALMVERHPDNVTAALMGGFVGSYLRELSPEDMSAASIPLAEVLPEYPPDAGPDWGKSPPQPPHGIGHFVRFGWAKEIKAIAVSPRFELATAKARGVLPESYSRKDMIFNLQRLAVLTTALARSPPDPDLIYDAMGDRVHQPYRMTLIPGLPKILSTLTPTSHPGLLGICLSGAGPTILALATHNFEAIANEIERIFGDEQVLVDHKVLNIDEKGSWVEDITEA</sequence>
<organism evidence="7">
    <name type="scientific">Cryptococcus neoformans var. grubii serotype A (strain H99 / ATCC 208821 / CBS 10515 / FGSC 9487)</name>
    <name type="common">Filobasidiella neoformans var. grubii</name>
    <dbReference type="NCBI Taxonomy" id="235443"/>
    <lineage>
        <taxon>Eukaryota</taxon>
        <taxon>Fungi</taxon>
        <taxon>Dikarya</taxon>
        <taxon>Basidiomycota</taxon>
        <taxon>Agaricomycotina</taxon>
        <taxon>Tremellomycetes</taxon>
        <taxon>Tremellales</taxon>
        <taxon>Cryptococcaceae</taxon>
        <taxon>Cryptococcus</taxon>
        <taxon>Cryptococcus neoformans species complex</taxon>
    </lineage>
</organism>
<protein>
    <recommendedName>
        <fullName evidence="4">Homoserine kinase</fullName>
        <shortName evidence="4">HK</shortName>
        <shortName evidence="4">HSK</shortName>
        <ecNumber evidence="1">2.7.1.39</ecNumber>
    </recommendedName>
</protein>
<dbReference type="EC" id="2.7.1.39" evidence="1"/>
<dbReference type="EMBL" id="EU623435">
    <property type="protein sequence ID" value="ACC85591.1"/>
    <property type="molecule type" value="mRNA"/>
</dbReference>
<dbReference type="EMBL" id="CP003828">
    <property type="protein sequence ID" value="AFR96886.1"/>
    <property type="molecule type" value="Genomic_DNA"/>
</dbReference>
<dbReference type="RefSeq" id="XP_012051624.1">
    <property type="nucleotide sequence ID" value="XM_012196234.1"/>
</dbReference>
<dbReference type="SwissPalm" id="J9VU26"/>
<dbReference type="GeneID" id="23887595"/>
<dbReference type="KEGG" id="cng:CNAG_04156"/>
<dbReference type="VEuPathDB" id="FungiDB:CNAG_04156"/>
<dbReference type="HOGENOM" id="CLU_041243_2_1_1"/>
<dbReference type="OrthoDB" id="1994at5206"/>
<dbReference type="UniPathway" id="UPA00050">
    <property type="reaction ID" value="UER00064"/>
</dbReference>
<dbReference type="Proteomes" id="UP000010091">
    <property type="component" value="Chromosome 9"/>
</dbReference>
<dbReference type="GO" id="GO:0005524">
    <property type="term" value="F:ATP binding"/>
    <property type="evidence" value="ECO:0007669"/>
    <property type="project" value="UniProtKB-KW"/>
</dbReference>
<dbReference type="GO" id="GO:0004413">
    <property type="term" value="F:homoserine kinase activity"/>
    <property type="evidence" value="ECO:0000316"/>
    <property type="project" value="UniProtKB"/>
</dbReference>
<dbReference type="GO" id="GO:0009088">
    <property type="term" value="P:threonine biosynthetic process"/>
    <property type="evidence" value="ECO:0000315"/>
    <property type="project" value="UniProtKB"/>
</dbReference>
<dbReference type="Gene3D" id="3.30.230.10">
    <property type="match status" value="1"/>
</dbReference>
<dbReference type="Gene3D" id="3.30.70.890">
    <property type="entry name" value="GHMP kinase, C-terminal domain"/>
    <property type="match status" value="1"/>
</dbReference>
<dbReference type="HAMAP" id="MF_00384">
    <property type="entry name" value="Homoser_kinase"/>
    <property type="match status" value="1"/>
</dbReference>
<dbReference type="InterPro" id="IPR013750">
    <property type="entry name" value="GHMP_kinase_C_dom"/>
</dbReference>
<dbReference type="InterPro" id="IPR036554">
    <property type="entry name" value="GHMP_kinase_C_sf"/>
</dbReference>
<dbReference type="InterPro" id="IPR006204">
    <property type="entry name" value="GHMP_kinase_N_dom"/>
</dbReference>
<dbReference type="InterPro" id="IPR006203">
    <property type="entry name" value="GHMP_knse_ATP-bd_CS"/>
</dbReference>
<dbReference type="InterPro" id="IPR000870">
    <property type="entry name" value="Homoserine_kinase"/>
</dbReference>
<dbReference type="InterPro" id="IPR020568">
    <property type="entry name" value="Ribosomal_Su5_D2-typ_SF"/>
</dbReference>
<dbReference type="InterPro" id="IPR014721">
    <property type="entry name" value="Ribsml_uS5_D2-typ_fold_subgr"/>
</dbReference>
<dbReference type="NCBIfam" id="TIGR00191">
    <property type="entry name" value="thrB"/>
    <property type="match status" value="1"/>
</dbReference>
<dbReference type="PANTHER" id="PTHR20861:SF1">
    <property type="entry name" value="HOMOSERINE KINASE"/>
    <property type="match status" value="1"/>
</dbReference>
<dbReference type="PANTHER" id="PTHR20861">
    <property type="entry name" value="HOMOSERINE/4-DIPHOSPHOCYTIDYL-2-C-METHYL-D-ERYTHRITOL KINASE"/>
    <property type="match status" value="1"/>
</dbReference>
<dbReference type="Pfam" id="PF08544">
    <property type="entry name" value="GHMP_kinases_C"/>
    <property type="match status" value="1"/>
</dbReference>
<dbReference type="Pfam" id="PF00288">
    <property type="entry name" value="GHMP_kinases_N"/>
    <property type="match status" value="1"/>
</dbReference>
<dbReference type="PIRSF" id="PIRSF000676">
    <property type="entry name" value="Homoser_kin"/>
    <property type="match status" value="1"/>
</dbReference>
<dbReference type="PRINTS" id="PR00958">
    <property type="entry name" value="HOMSERKINASE"/>
</dbReference>
<dbReference type="SUPFAM" id="SSF55060">
    <property type="entry name" value="GHMP Kinase, C-terminal domain"/>
    <property type="match status" value="1"/>
</dbReference>
<dbReference type="SUPFAM" id="SSF54211">
    <property type="entry name" value="Ribosomal protein S5 domain 2-like"/>
    <property type="match status" value="1"/>
</dbReference>
<dbReference type="PROSITE" id="PS00627">
    <property type="entry name" value="GHMP_KINASES_ATP"/>
    <property type="match status" value="1"/>
</dbReference>
<feature type="chain" id="PRO_0000461583" description="Homoserine kinase">
    <location>
        <begin position="1"/>
        <end position="357"/>
    </location>
</feature>
<proteinExistence type="evidence at transcript level"/>
<keyword id="KW-0028">Amino-acid biosynthesis</keyword>
<keyword id="KW-0067">ATP-binding</keyword>
<keyword id="KW-0418">Kinase</keyword>
<keyword id="KW-0547">Nucleotide-binding</keyword>
<keyword id="KW-0791">Threonine biosynthesis</keyword>
<keyword id="KW-0808">Transferase</keyword>
<name>KHSE_CRYNH</name>
<comment type="function">
    <text evidence="2">Commits homoserine to the threonine biosynthesis pathway by catalyzing its O-phosphorylation.</text>
</comment>
<comment type="catalytic activity">
    <reaction evidence="1">
        <text>L-homoserine + ATP = O-phospho-L-homoserine + ADP + H(+)</text>
        <dbReference type="Rhea" id="RHEA:13985"/>
        <dbReference type="ChEBI" id="CHEBI:15378"/>
        <dbReference type="ChEBI" id="CHEBI:30616"/>
        <dbReference type="ChEBI" id="CHEBI:57476"/>
        <dbReference type="ChEBI" id="CHEBI:57590"/>
        <dbReference type="ChEBI" id="CHEBI:456216"/>
        <dbReference type="EC" id="2.7.1.39"/>
    </reaction>
    <physiologicalReaction direction="left-to-right" evidence="1">
        <dbReference type="Rhea" id="RHEA:13986"/>
    </physiologicalReaction>
</comment>
<comment type="pathway">
    <text evidence="2">Amino-acid biosynthesis; L-threonine biosynthesis; L-threonine from L-aspartate: step 4/5.</text>
</comment>
<comment type="disruption phenotype">
    <text evidence="2">Threonine auxotrophy; the presence of threonine dipeptides (but not threonine amino acids), rescue growth on proline nitrogen source.</text>
</comment>
<comment type="similarity">
    <text evidence="4">Belongs to the GHMP kinase family. Homoserine kinase subfamily.</text>
</comment>
<evidence type="ECO:0000250" key="1">
    <source>
        <dbReference type="UniProtKB" id="P17423"/>
    </source>
</evidence>
<evidence type="ECO:0000269" key="2">
    <source>
    </source>
</evidence>
<evidence type="ECO:0000303" key="3">
    <source>
    </source>
</evidence>
<evidence type="ECO:0000305" key="4"/>
<evidence type="ECO:0000312" key="5">
    <source>
        <dbReference type="EMBL" id="ACC85591.1"/>
    </source>
</evidence>
<evidence type="ECO:0000312" key="6">
    <source>
        <dbReference type="EMBL" id="AFR96886.1"/>
    </source>
</evidence>
<evidence type="ECO:0000312" key="7">
    <source>
        <dbReference type="Proteomes" id="UP000010091"/>
    </source>
</evidence>
<reference evidence="5" key="1">
    <citation type="journal article" date="2008" name="Microbiology">
        <title>Threonine biosynthetic genes are essential in Cryptococcus neoformans.</title>
        <authorList>
            <person name="Kingsbury J.M."/>
            <person name="McCusker J.H."/>
        </authorList>
    </citation>
    <scope>NUCLEOTIDE SEQUENCE [MRNA]</scope>
    <scope>FUNCTION</scope>
    <scope>PATHWAY</scope>
    <scope>DISRUPTION PHENOTYPE</scope>
</reference>
<reference evidence="7" key="2">
    <citation type="journal article" date="2014" name="PLoS Genet.">
        <title>Analysis of the genome and transcriptome of Cryptococcus neoformans var. grubii reveals complex RNA expression and microevolution leading to virulence attenuation.</title>
        <authorList>
            <person name="Janbon G."/>
            <person name="Ormerod K.L."/>
            <person name="Paulet D."/>
            <person name="Byrnes E.J. III"/>
            <person name="Yadav V."/>
            <person name="Chatterjee G."/>
            <person name="Mullapudi N."/>
            <person name="Hon C.-C."/>
            <person name="Billmyre R.B."/>
            <person name="Brunel F."/>
            <person name="Bahn Y.-S."/>
            <person name="Chen W."/>
            <person name="Chen Y."/>
            <person name="Chow E.W.L."/>
            <person name="Coppee J.-Y."/>
            <person name="Floyd-Averette A."/>
            <person name="Gaillardin C."/>
            <person name="Gerik K.J."/>
            <person name="Goldberg J."/>
            <person name="Gonzalez-Hilarion S."/>
            <person name="Gujja S."/>
            <person name="Hamlin J.L."/>
            <person name="Hsueh Y.-P."/>
            <person name="Ianiri G."/>
            <person name="Jones S."/>
            <person name="Kodira C.D."/>
            <person name="Kozubowski L."/>
            <person name="Lam W."/>
            <person name="Marra M."/>
            <person name="Mesner L.D."/>
            <person name="Mieczkowski P.A."/>
            <person name="Moyrand F."/>
            <person name="Nielsen K."/>
            <person name="Proux C."/>
            <person name="Rossignol T."/>
            <person name="Schein J.E."/>
            <person name="Sun S."/>
            <person name="Wollschlaeger C."/>
            <person name="Wood I.A."/>
            <person name="Zeng Q."/>
            <person name="Neuveglise C."/>
            <person name="Newlon C.S."/>
            <person name="Perfect J.R."/>
            <person name="Lodge J.K."/>
            <person name="Idnurm A."/>
            <person name="Stajich J.E."/>
            <person name="Kronstad J.W."/>
            <person name="Sanyal K."/>
            <person name="Heitman J."/>
            <person name="Fraser J.A."/>
            <person name="Cuomo C.A."/>
            <person name="Dietrich F.S."/>
        </authorList>
    </citation>
    <scope>NUCLEOTIDE SEQUENCE [LARGE SCALE GENOMIC DNA]</scope>
    <source>
        <strain evidence="7">H99 / ATCC 208821 / CBS 10515 / FGSC 9487</strain>
    </source>
</reference>
<accession>J9VU26</accession>
<accession>B2MVI2</accession>